<comment type="function">
    <text evidence="1">Microtubule inner protein (MIP) part of the dynein-decorated doublet microtubules (DMTs) in flagellum axoneme. May serve to reinforce and thus stabilize the microtubule structure in the sperm flagella.</text>
</comment>
<comment type="subunit">
    <text evidence="1">Microtubule inner protein component of sperm flagellar doublet microtubules.</text>
</comment>
<comment type="subcellular location">
    <subcellularLocation>
        <location evidence="1">Cytoplasm</location>
        <location evidence="1">Cytoskeleton</location>
        <location evidence="1">Flagellum axoneme</location>
    </subcellularLocation>
    <text evidence="1">Localizes to the A-tubules of DMTs.</text>
</comment>
<comment type="tissue specificity">
    <text evidence="1">Expressed in sperm.</text>
</comment>
<comment type="sequence caution" evidence="3">
    <conflict type="erroneous termination">
        <sequence resource="EMBL-CDS" id="AAI10153"/>
    </conflict>
    <text>Truncated C-terminus.</text>
</comment>
<protein>
    <recommendedName>
        <fullName>Sperm microtubule inner protein 8</fullName>
    </recommendedName>
    <alternativeName>
        <fullName evidence="2">Testis, prostate and placenta-expressed protein</fullName>
    </alternativeName>
</protein>
<dbReference type="EMBL" id="BC110152">
    <property type="protein sequence ID" value="AAI10153.1"/>
    <property type="status" value="ALT_SEQ"/>
    <property type="molecule type" value="mRNA"/>
</dbReference>
<dbReference type="EMBL" id="BK006621">
    <property type="protein sequence ID" value="DAA06539.1"/>
    <property type="molecule type" value="mRNA"/>
</dbReference>
<dbReference type="RefSeq" id="NP_001289602.1">
    <property type="nucleotide sequence ID" value="NM_001302673.1"/>
</dbReference>
<dbReference type="PDB" id="8OTZ">
    <property type="method" value="EM"/>
    <property type="resolution" value="3.60 A"/>
    <property type="chains" value="DY/DZ/Da/Ee=1-216"/>
</dbReference>
<dbReference type="PDBsum" id="8OTZ"/>
<dbReference type="EMDB" id="EMD-17187"/>
<dbReference type="EMDB" id="EMD-50664"/>
<dbReference type="SMR" id="Q2YDM5"/>
<dbReference type="FunCoup" id="Q2YDM5">
    <property type="interactions" value="182"/>
</dbReference>
<dbReference type="STRING" id="9913.ENSBTAP00000016991"/>
<dbReference type="PaxDb" id="9913-ENSBTAP00000016991"/>
<dbReference type="Ensembl" id="ENSBTAT00000016991.5">
    <property type="protein sequence ID" value="ENSBTAP00000016991.4"/>
    <property type="gene ID" value="ENSBTAG00000012785.6"/>
</dbReference>
<dbReference type="GeneID" id="618782"/>
<dbReference type="KEGG" id="bta:618782"/>
<dbReference type="CTD" id="618782"/>
<dbReference type="VEuPathDB" id="HostDB:ENSBTAG00000012785"/>
<dbReference type="VGNC" id="VGNC:35746">
    <property type="gene designation" value="SPMIP8"/>
</dbReference>
<dbReference type="eggNOG" id="ENOG502R4EY">
    <property type="taxonomic scope" value="Eukaryota"/>
</dbReference>
<dbReference type="GeneTree" id="ENSGT00390000013928"/>
<dbReference type="HOGENOM" id="CLU_081890_1_0_1"/>
<dbReference type="InParanoid" id="Q2YDM5"/>
<dbReference type="OMA" id="YPQYSRN"/>
<dbReference type="OrthoDB" id="9970246at2759"/>
<dbReference type="TreeFam" id="TF329060"/>
<dbReference type="Proteomes" id="UP000009136">
    <property type="component" value="Chromosome 18"/>
</dbReference>
<dbReference type="Bgee" id="ENSBTAG00000012785">
    <property type="expression patterns" value="Expressed in semen and 36 other cell types or tissues"/>
</dbReference>
<dbReference type="GO" id="GO:0160111">
    <property type="term" value="C:axonemal A tubule inner sheath"/>
    <property type="evidence" value="ECO:0000318"/>
    <property type="project" value="GO_Central"/>
</dbReference>
<dbReference type="GO" id="GO:0031514">
    <property type="term" value="C:motile cilium"/>
    <property type="evidence" value="ECO:0007669"/>
    <property type="project" value="UniProtKB-KW"/>
</dbReference>
<dbReference type="InterPro" id="IPR034584">
    <property type="entry name" value="SPMIP8"/>
</dbReference>
<dbReference type="PANTHER" id="PTHR35348">
    <property type="entry name" value="TESTIS, PROSTATE AND PLACENTA-EXPRESSED PROTEIN"/>
    <property type="match status" value="1"/>
</dbReference>
<dbReference type="PANTHER" id="PTHR35348:SF1">
    <property type="entry name" value="TESTIS, PROSTATE AND PLACENTA-EXPRESSED PROTEIN"/>
    <property type="match status" value="1"/>
</dbReference>
<dbReference type="Pfam" id="PF22574">
    <property type="entry name" value="SPMIP8"/>
    <property type="match status" value="1"/>
</dbReference>
<proteinExistence type="evidence at protein level"/>
<name>SMIP8_BOVIN</name>
<reference key="1">
    <citation type="journal article" date="2009" name="Genome Biol.">
        <title>A whole-genome assembly of the domestic cow, Bos taurus.</title>
        <authorList>
            <person name="Zimin A.V."/>
            <person name="Delcher A.L."/>
            <person name="Florea L."/>
            <person name="Kelley D.R."/>
            <person name="Schatz M.C."/>
            <person name="Puiu D."/>
            <person name="Hanrahan F."/>
            <person name="Pertea G."/>
            <person name="Van Tassell C.P."/>
            <person name="Sonstegard T.S."/>
            <person name="Marcais G."/>
            <person name="Roberts M."/>
            <person name="Subramanian P."/>
            <person name="Yorke J.A."/>
            <person name="Salzberg S.L."/>
        </authorList>
    </citation>
    <scope>NUCLEOTIDE SEQUENCE [LARGE SCALE GENOMIC DNA]</scope>
    <source>
        <strain>Hereford</strain>
    </source>
</reference>
<reference key="2">
    <citation type="submission" date="2005-11" db="EMBL/GenBank/DDBJ databases">
        <authorList>
            <consortium name="NIH - Mammalian Gene Collection (MGC) project"/>
        </authorList>
    </citation>
    <scope>NUCLEOTIDE SEQUENCE [LARGE SCALE MRNA]</scope>
    <source>
        <strain>Crossbred X Angus</strain>
        <tissue>Liver</tissue>
    </source>
</reference>
<reference key="3">
    <citation type="journal article" date="2009" name="Biochem. Genet.">
        <title>Molecular evolution of TEPP protein genes in metazoans.</title>
        <authorList>
            <person name="Hahn Y."/>
        </authorList>
    </citation>
    <scope>IDENTIFICATION</scope>
</reference>
<reference evidence="4" key="4">
    <citation type="journal article" date="2023" name="Cell">
        <title>Structural specializations of the sperm tail.</title>
        <authorList>
            <person name="Leung M.R."/>
            <person name="Zeng J."/>
            <person name="Wang X."/>
            <person name="Roelofs M.C."/>
            <person name="Huang W."/>
            <person name="Zenezini Chiozzi R."/>
            <person name="Hevler J.F."/>
            <person name="Heck A.J.R."/>
            <person name="Dutcher S.K."/>
            <person name="Brown A."/>
            <person name="Zhang R."/>
            <person name="Zeev-Ben-Mordehai T."/>
        </authorList>
    </citation>
    <scope>STRUCTURE BY ELECTRON MICROSCOPY (3.60 ANGSTROMS)</scope>
    <scope>FUNCTION</scope>
    <scope>SUBUNIT</scope>
    <scope>SUBCELLULAR LOCATION</scope>
    <scope>TISSUE SPECIFICITY</scope>
</reference>
<gene>
    <name type="primary">SPMIP8</name>
    <name evidence="2" type="synonym">TEPP</name>
</gene>
<accession>Q2YDM5</accession>
<accession>C9QNT9</accession>
<keyword id="KW-0002">3D-structure</keyword>
<keyword id="KW-0966">Cell projection</keyword>
<keyword id="KW-0969">Cilium</keyword>
<keyword id="KW-0963">Cytoplasm</keyword>
<keyword id="KW-0206">Cytoskeleton</keyword>
<keyword id="KW-0282">Flagellum</keyword>
<keyword id="KW-1185">Reference proteome</keyword>
<sequence>MARIIDLVPWEDGSTHVYASPAILLPIPRRRNQLAGVKQQLYHPALPSLRRMDMDSVKACLSDEHCQSTTYCRKDDFDNAYFTLLGVPNKPLQCLDITETGQRLRNRYHEGKLAPIAPGINRVDWPCFTRAIEDWSRFVSSAGEFKLPCASKKVESFSGYAVRYLKPEVTQSWRFCLNQNPSLDRYGQKPLPFDSLNAFRRFGSNYSRVNYLTPWH</sequence>
<organism>
    <name type="scientific">Bos taurus</name>
    <name type="common">Bovine</name>
    <dbReference type="NCBI Taxonomy" id="9913"/>
    <lineage>
        <taxon>Eukaryota</taxon>
        <taxon>Metazoa</taxon>
        <taxon>Chordata</taxon>
        <taxon>Craniata</taxon>
        <taxon>Vertebrata</taxon>
        <taxon>Euteleostomi</taxon>
        <taxon>Mammalia</taxon>
        <taxon>Eutheria</taxon>
        <taxon>Laurasiatheria</taxon>
        <taxon>Artiodactyla</taxon>
        <taxon>Ruminantia</taxon>
        <taxon>Pecora</taxon>
        <taxon>Bovidae</taxon>
        <taxon>Bovinae</taxon>
        <taxon>Bos</taxon>
    </lineage>
</organism>
<evidence type="ECO:0000269" key="1">
    <source>
    </source>
</evidence>
<evidence type="ECO:0000303" key="2">
    <source>
    </source>
</evidence>
<evidence type="ECO:0000305" key="3"/>
<evidence type="ECO:0007744" key="4">
    <source>
        <dbReference type="PDB" id="8OTZ"/>
    </source>
</evidence>
<feature type="chain" id="PRO_0000325776" description="Sperm microtubule inner protein 8">
    <location>
        <begin position="1"/>
        <end position="216"/>
    </location>
</feature>